<sequence length="156" mass="17652">MSRKNQAPKREVLPDPLYNSKIVTRLINRVMLDGKRGTAATIVYDAFSAIKEATGNDALEVFETAMDNIMPVLEVRARRVGGSNYQVPVEVRPERRTTLGLRWLVNASRARGEHTMKDRLAKEIMDAANNTGASVKKREDTHKMAEANRAFAHFRW</sequence>
<feature type="chain" id="PRO_0000226533" description="Small ribosomal subunit protein uS7">
    <location>
        <begin position="1"/>
        <end position="156"/>
    </location>
</feature>
<organism>
    <name type="scientific">Streptococcus pyogenes serotype M28 (strain MGAS6180)</name>
    <dbReference type="NCBI Taxonomy" id="319701"/>
    <lineage>
        <taxon>Bacteria</taxon>
        <taxon>Bacillati</taxon>
        <taxon>Bacillota</taxon>
        <taxon>Bacilli</taxon>
        <taxon>Lactobacillales</taxon>
        <taxon>Streptococcaceae</taxon>
        <taxon>Streptococcus</taxon>
    </lineage>
</organism>
<accession>Q48VB7</accession>
<dbReference type="EMBL" id="CP000056">
    <property type="protein sequence ID" value="AAX71339.1"/>
    <property type="molecule type" value="Genomic_DNA"/>
</dbReference>
<dbReference type="RefSeq" id="WP_002986047.1">
    <property type="nucleotide sequence ID" value="NC_007296.2"/>
</dbReference>
<dbReference type="SMR" id="Q48VB7"/>
<dbReference type="GeneID" id="69900198"/>
<dbReference type="KEGG" id="spb:M28_Spy0225"/>
<dbReference type="HOGENOM" id="CLU_072226_1_1_9"/>
<dbReference type="GO" id="GO:0015935">
    <property type="term" value="C:small ribosomal subunit"/>
    <property type="evidence" value="ECO:0007669"/>
    <property type="project" value="InterPro"/>
</dbReference>
<dbReference type="GO" id="GO:0019843">
    <property type="term" value="F:rRNA binding"/>
    <property type="evidence" value="ECO:0007669"/>
    <property type="project" value="UniProtKB-UniRule"/>
</dbReference>
<dbReference type="GO" id="GO:0003735">
    <property type="term" value="F:structural constituent of ribosome"/>
    <property type="evidence" value="ECO:0007669"/>
    <property type="project" value="InterPro"/>
</dbReference>
<dbReference type="GO" id="GO:0000049">
    <property type="term" value="F:tRNA binding"/>
    <property type="evidence" value="ECO:0007669"/>
    <property type="project" value="UniProtKB-UniRule"/>
</dbReference>
<dbReference type="GO" id="GO:0006412">
    <property type="term" value="P:translation"/>
    <property type="evidence" value="ECO:0007669"/>
    <property type="project" value="UniProtKB-UniRule"/>
</dbReference>
<dbReference type="CDD" id="cd14869">
    <property type="entry name" value="uS7_Bacteria"/>
    <property type="match status" value="1"/>
</dbReference>
<dbReference type="FunFam" id="1.10.455.10:FF:000001">
    <property type="entry name" value="30S ribosomal protein S7"/>
    <property type="match status" value="1"/>
</dbReference>
<dbReference type="Gene3D" id="1.10.455.10">
    <property type="entry name" value="Ribosomal protein S7 domain"/>
    <property type="match status" value="1"/>
</dbReference>
<dbReference type="HAMAP" id="MF_00480_B">
    <property type="entry name" value="Ribosomal_uS7_B"/>
    <property type="match status" value="1"/>
</dbReference>
<dbReference type="InterPro" id="IPR000235">
    <property type="entry name" value="Ribosomal_uS7"/>
</dbReference>
<dbReference type="InterPro" id="IPR005717">
    <property type="entry name" value="Ribosomal_uS7_bac/org-type"/>
</dbReference>
<dbReference type="InterPro" id="IPR020606">
    <property type="entry name" value="Ribosomal_uS7_CS"/>
</dbReference>
<dbReference type="InterPro" id="IPR023798">
    <property type="entry name" value="Ribosomal_uS7_dom"/>
</dbReference>
<dbReference type="InterPro" id="IPR036823">
    <property type="entry name" value="Ribosomal_uS7_dom_sf"/>
</dbReference>
<dbReference type="NCBIfam" id="TIGR01029">
    <property type="entry name" value="rpsG_bact"/>
    <property type="match status" value="1"/>
</dbReference>
<dbReference type="PANTHER" id="PTHR11205">
    <property type="entry name" value="RIBOSOMAL PROTEIN S7"/>
    <property type="match status" value="1"/>
</dbReference>
<dbReference type="Pfam" id="PF00177">
    <property type="entry name" value="Ribosomal_S7"/>
    <property type="match status" value="1"/>
</dbReference>
<dbReference type="PIRSF" id="PIRSF002122">
    <property type="entry name" value="RPS7p_RPS7a_RPS5e_RPS7o"/>
    <property type="match status" value="1"/>
</dbReference>
<dbReference type="SUPFAM" id="SSF47973">
    <property type="entry name" value="Ribosomal protein S7"/>
    <property type="match status" value="1"/>
</dbReference>
<dbReference type="PROSITE" id="PS00052">
    <property type="entry name" value="RIBOSOMAL_S7"/>
    <property type="match status" value="1"/>
</dbReference>
<protein>
    <recommendedName>
        <fullName evidence="1">Small ribosomal subunit protein uS7</fullName>
    </recommendedName>
    <alternativeName>
        <fullName evidence="2">30S ribosomal protein S7</fullName>
    </alternativeName>
</protein>
<proteinExistence type="inferred from homology"/>
<reference key="1">
    <citation type="journal article" date="2005" name="J. Infect. Dis.">
        <title>Genome sequence of a serotype M28 strain of group A Streptococcus: potential new insights into puerperal sepsis and bacterial disease specificity.</title>
        <authorList>
            <person name="Green N.M."/>
            <person name="Zhang S."/>
            <person name="Porcella S.F."/>
            <person name="Nagiec M.J."/>
            <person name="Barbian K.D."/>
            <person name="Beres S.B."/>
            <person name="Lefebvre R.B."/>
            <person name="Musser J.M."/>
        </authorList>
    </citation>
    <scope>NUCLEOTIDE SEQUENCE [LARGE SCALE GENOMIC DNA]</scope>
    <source>
        <strain>MGAS6180</strain>
    </source>
</reference>
<gene>
    <name evidence="1" type="primary">rpsG</name>
    <name type="ordered locus">M28_Spy0225</name>
</gene>
<comment type="function">
    <text evidence="1">One of the primary rRNA binding proteins, it binds directly to 16S rRNA where it nucleates assembly of the head domain of the 30S subunit. Is located at the subunit interface close to the decoding center, probably blocks exit of the E-site tRNA.</text>
</comment>
<comment type="subunit">
    <text evidence="1">Part of the 30S ribosomal subunit. Contacts proteins S9 and S11.</text>
</comment>
<comment type="similarity">
    <text evidence="1">Belongs to the universal ribosomal protein uS7 family.</text>
</comment>
<evidence type="ECO:0000255" key="1">
    <source>
        <dbReference type="HAMAP-Rule" id="MF_00480"/>
    </source>
</evidence>
<evidence type="ECO:0000305" key="2"/>
<name>RS7_STRPM</name>
<keyword id="KW-0687">Ribonucleoprotein</keyword>
<keyword id="KW-0689">Ribosomal protein</keyword>
<keyword id="KW-0694">RNA-binding</keyword>
<keyword id="KW-0699">rRNA-binding</keyword>
<keyword id="KW-0820">tRNA-binding</keyword>